<name>NDK_DEHMB</name>
<gene>
    <name evidence="1" type="primary">ndk</name>
    <name type="ordered locus">DehaBAV1_0373</name>
</gene>
<dbReference type="EC" id="2.7.4.6" evidence="1"/>
<dbReference type="EMBL" id="CP000688">
    <property type="protein sequence ID" value="ABQ16958.1"/>
    <property type="molecule type" value="Genomic_DNA"/>
</dbReference>
<dbReference type="SMR" id="A5FS65"/>
<dbReference type="KEGG" id="deb:DehaBAV1_0373"/>
<dbReference type="PATRIC" id="fig|216389.18.peg.414"/>
<dbReference type="HOGENOM" id="CLU_060216_6_3_0"/>
<dbReference type="GO" id="GO:0005737">
    <property type="term" value="C:cytoplasm"/>
    <property type="evidence" value="ECO:0007669"/>
    <property type="project" value="UniProtKB-SubCell"/>
</dbReference>
<dbReference type="GO" id="GO:0005524">
    <property type="term" value="F:ATP binding"/>
    <property type="evidence" value="ECO:0007669"/>
    <property type="project" value="UniProtKB-UniRule"/>
</dbReference>
<dbReference type="GO" id="GO:0046872">
    <property type="term" value="F:metal ion binding"/>
    <property type="evidence" value="ECO:0007669"/>
    <property type="project" value="UniProtKB-KW"/>
</dbReference>
<dbReference type="GO" id="GO:0004550">
    <property type="term" value="F:nucleoside diphosphate kinase activity"/>
    <property type="evidence" value="ECO:0007669"/>
    <property type="project" value="UniProtKB-UniRule"/>
</dbReference>
<dbReference type="GO" id="GO:0006241">
    <property type="term" value="P:CTP biosynthetic process"/>
    <property type="evidence" value="ECO:0007669"/>
    <property type="project" value="UniProtKB-UniRule"/>
</dbReference>
<dbReference type="GO" id="GO:0006183">
    <property type="term" value="P:GTP biosynthetic process"/>
    <property type="evidence" value="ECO:0007669"/>
    <property type="project" value="UniProtKB-UniRule"/>
</dbReference>
<dbReference type="GO" id="GO:0006228">
    <property type="term" value="P:UTP biosynthetic process"/>
    <property type="evidence" value="ECO:0007669"/>
    <property type="project" value="UniProtKB-UniRule"/>
</dbReference>
<dbReference type="CDD" id="cd04413">
    <property type="entry name" value="NDPk_I"/>
    <property type="match status" value="1"/>
</dbReference>
<dbReference type="FunFam" id="3.30.70.141:FF:000003">
    <property type="entry name" value="Nucleoside diphosphate kinase"/>
    <property type="match status" value="1"/>
</dbReference>
<dbReference type="Gene3D" id="3.30.70.141">
    <property type="entry name" value="Nucleoside diphosphate kinase-like domain"/>
    <property type="match status" value="1"/>
</dbReference>
<dbReference type="HAMAP" id="MF_00451">
    <property type="entry name" value="NDP_kinase"/>
    <property type="match status" value="1"/>
</dbReference>
<dbReference type="InterPro" id="IPR034907">
    <property type="entry name" value="NDK-like_dom"/>
</dbReference>
<dbReference type="InterPro" id="IPR036850">
    <property type="entry name" value="NDK-like_dom_sf"/>
</dbReference>
<dbReference type="InterPro" id="IPR001564">
    <property type="entry name" value="Nucleoside_diP_kinase"/>
</dbReference>
<dbReference type="NCBIfam" id="NF001908">
    <property type="entry name" value="PRK00668.1"/>
    <property type="match status" value="1"/>
</dbReference>
<dbReference type="PANTHER" id="PTHR11349">
    <property type="entry name" value="NUCLEOSIDE DIPHOSPHATE KINASE"/>
    <property type="match status" value="1"/>
</dbReference>
<dbReference type="Pfam" id="PF00334">
    <property type="entry name" value="NDK"/>
    <property type="match status" value="1"/>
</dbReference>
<dbReference type="PRINTS" id="PR01243">
    <property type="entry name" value="NUCDPKINASE"/>
</dbReference>
<dbReference type="SMART" id="SM00562">
    <property type="entry name" value="NDK"/>
    <property type="match status" value="1"/>
</dbReference>
<dbReference type="SUPFAM" id="SSF54919">
    <property type="entry name" value="Nucleoside diphosphate kinase, NDK"/>
    <property type="match status" value="1"/>
</dbReference>
<dbReference type="PROSITE" id="PS51374">
    <property type="entry name" value="NDPK_LIKE"/>
    <property type="match status" value="1"/>
</dbReference>
<organism>
    <name type="scientific">Dehalococcoides mccartyi (strain ATCC BAA-2100 / JCM 16839 / KCTC 5957 / BAV1)</name>
    <dbReference type="NCBI Taxonomy" id="216389"/>
    <lineage>
        <taxon>Bacteria</taxon>
        <taxon>Bacillati</taxon>
        <taxon>Chloroflexota</taxon>
        <taxon>Dehalococcoidia</taxon>
        <taxon>Dehalococcoidales</taxon>
        <taxon>Dehalococcoidaceae</taxon>
        <taxon>Dehalococcoides</taxon>
    </lineage>
</organism>
<proteinExistence type="inferred from homology"/>
<keyword id="KW-0067">ATP-binding</keyword>
<keyword id="KW-0963">Cytoplasm</keyword>
<keyword id="KW-0418">Kinase</keyword>
<keyword id="KW-0460">Magnesium</keyword>
<keyword id="KW-0479">Metal-binding</keyword>
<keyword id="KW-0546">Nucleotide metabolism</keyword>
<keyword id="KW-0547">Nucleotide-binding</keyword>
<keyword id="KW-0597">Phosphoprotein</keyword>
<keyword id="KW-0808">Transferase</keyword>
<accession>A5FS65</accession>
<comment type="function">
    <text evidence="1">Major role in the synthesis of nucleoside triphosphates other than ATP. The ATP gamma phosphate is transferred to the NDP beta phosphate via a ping-pong mechanism, using a phosphorylated active-site intermediate.</text>
</comment>
<comment type="catalytic activity">
    <reaction evidence="1">
        <text>a 2'-deoxyribonucleoside 5'-diphosphate + ATP = a 2'-deoxyribonucleoside 5'-triphosphate + ADP</text>
        <dbReference type="Rhea" id="RHEA:44640"/>
        <dbReference type="ChEBI" id="CHEBI:30616"/>
        <dbReference type="ChEBI" id="CHEBI:61560"/>
        <dbReference type="ChEBI" id="CHEBI:73316"/>
        <dbReference type="ChEBI" id="CHEBI:456216"/>
        <dbReference type="EC" id="2.7.4.6"/>
    </reaction>
</comment>
<comment type="catalytic activity">
    <reaction evidence="1">
        <text>a ribonucleoside 5'-diphosphate + ATP = a ribonucleoside 5'-triphosphate + ADP</text>
        <dbReference type="Rhea" id="RHEA:18113"/>
        <dbReference type="ChEBI" id="CHEBI:30616"/>
        <dbReference type="ChEBI" id="CHEBI:57930"/>
        <dbReference type="ChEBI" id="CHEBI:61557"/>
        <dbReference type="ChEBI" id="CHEBI:456216"/>
        <dbReference type="EC" id="2.7.4.6"/>
    </reaction>
</comment>
<comment type="cofactor">
    <cofactor evidence="1">
        <name>Mg(2+)</name>
        <dbReference type="ChEBI" id="CHEBI:18420"/>
    </cofactor>
</comment>
<comment type="subunit">
    <text evidence="1">Homotetramer.</text>
</comment>
<comment type="subcellular location">
    <subcellularLocation>
        <location evidence="1">Cytoplasm</location>
    </subcellularLocation>
</comment>
<comment type="similarity">
    <text evidence="1">Belongs to the NDK family.</text>
</comment>
<sequence length="142" mass="15701">MERTLLLVKPDGVNRGLSGEILGRMEKLGLKLIGLRMLQMDAVLADKHYAPHRARPFFKDLVTYITSGPITAAVFEGENAVEKMRKAMGATDPAKSEKGTVRGDLGIDIEQNTVHGSDSAENAKHEISLFFSESELVNYDRR</sequence>
<reference key="1">
    <citation type="submission" date="2007-05" db="EMBL/GenBank/DDBJ databases">
        <title>Complete sequence of Dehalococcoides sp. BAV1.</title>
        <authorList>
            <consortium name="US DOE Joint Genome Institute"/>
            <person name="Copeland A."/>
            <person name="Lucas S."/>
            <person name="Lapidus A."/>
            <person name="Barry K."/>
            <person name="Detter J.C."/>
            <person name="Glavina del Rio T."/>
            <person name="Hammon N."/>
            <person name="Israni S."/>
            <person name="Pitluck S."/>
            <person name="Lowry S."/>
            <person name="Clum A."/>
            <person name="Schmutz J."/>
            <person name="Larimer F."/>
            <person name="Land M."/>
            <person name="Hauser L."/>
            <person name="Kyrpides N."/>
            <person name="Kim E."/>
            <person name="Ritalahti K.M."/>
            <person name="Loeffler F."/>
            <person name="Richardson P."/>
        </authorList>
    </citation>
    <scope>NUCLEOTIDE SEQUENCE [LARGE SCALE GENOMIC DNA]</scope>
    <source>
        <strain>ATCC BAA-2100 / JCM 16839 / KCTC 5957 / BAV1</strain>
    </source>
</reference>
<feature type="chain" id="PRO_1000080960" description="Nucleoside diphosphate kinase">
    <location>
        <begin position="1"/>
        <end position="142"/>
    </location>
</feature>
<feature type="active site" description="Pros-phosphohistidine intermediate" evidence="1">
    <location>
        <position position="115"/>
    </location>
</feature>
<feature type="binding site" evidence="1">
    <location>
        <position position="9"/>
    </location>
    <ligand>
        <name>ATP</name>
        <dbReference type="ChEBI" id="CHEBI:30616"/>
    </ligand>
</feature>
<feature type="binding site" evidence="1">
    <location>
        <position position="57"/>
    </location>
    <ligand>
        <name>ATP</name>
        <dbReference type="ChEBI" id="CHEBI:30616"/>
    </ligand>
</feature>
<feature type="binding site" evidence="1">
    <location>
        <position position="85"/>
    </location>
    <ligand>
        <name>ATP</name>
        <dbReference type="ChEBI" id="CHEBI:30616"/>
    </ligand>
</feature>
<feature type="binding site" evidence="1">
    <location>
        <position position="91"/>
    </location>
    <ligand>
        <name>ATP</name>
        <dbReference type="ChEBI" id="CHEBI:30616"/>
    </ligand>
</feature>
<feature type="binding site" evidence="1">
    <location>
        <position position="102"/>
    </location>
    <ligand>
        <name>ATP</name>
        <dbReference type="ChEBI" id="CHEBI:30616"/>
    </ligand>
</feature>
<feature type="binding site" evidence="1">
    <location>
        <position position="112"/>
    </location>
    <ligand>
        <name>ATP</name>
        <dbReference type="ChEBI" id="CHEBI:30616"/>
    </ligand>
</feature>
<protein>
    <recommendedName>
        <fullName evidence="1">Nucleoside diphosphate kinase</fullName>
        <shortName evidence="1">NDK</shortName>
        <shortName evidence="1">NDP kinase</shortName>
        <ecNumber evidence="1">2.7.4.6</ecNumber>
    </recommendedName>
    <alternativeName>
        <fullName evidence="1">Nucleoside-2-P kinase</fullName>
    </alternativeName>
</protein>
<evidence type="ECO:0000255" key="1">
    <source>
        <dbReference type="HAMAP-Rule" id="MF_00451"/>
    </source>
</evidence>